<feature type="chain" id="PRO_0000411415" description="UDP-N-acetylmuramoyl-L-alanyl-D-glutamate--L-lysine ligase">
    <location>
        <begin position="1"/>
        <end position="481"/>
    </location>
</feature>
<feature type="short sequence motif" description="L-lysine recognition motif">
    <location>
        <begin position="404"/>
        <end position="407"/>
    </location>
</feature>
<feature type="binding site" evidence="1">
    <location>
        <position position="42"/>
    </location>
    <ligand>
        <name>UDP-N-acetyl-alpha-D-muramoyl-L-alanyl-D-glutamate</name>
        <dbReference type="ChEBI" id="CHEBI:83900"/>
    </ligand>
</feature>
<feature type="binding site" evidence="1">
    <location>
        <begin position="118"/>
        <end position="124"/>
    </location>
    <ligand>
        <name>ATP</name>
        <dbReference type="ChEBI" id="CHEBI:30616"/>
    </ligand>
</feature>
<feature type="binding site" evidence="1">
    <location>
        <position position="158"/>
    </location>
    <ligand>
        <name>UDP-N-acetyl-alpha-D-muramoyl-L-alanyl-D-glutamate</name>
        <dbReference type="ChEBI" id="CHEBI:83900"/>
    </ligand>
</feature>
<feature type="binding site" evidence="1">
    <location>
        <begin position="160"/>
        <end position="161"/>
    </location>
    <ligand>
        <name>UDP-N-acetyl-alpha-D-muramoyl-L-alanyl-D-glutamate</name>
        <dbReference type="ChEBI" id="CHEBI:83900"/>
    </ligand>
</feature>
<feature type="binding site" evidence="1">
    <location>
        <position position="187"/>
    </location>
    <ligand>
        <name>UDP-N-acetyl-alpha-D-muramoyl-L-alanyl-D-glutamate</name>
        <dbReference type="ChEBI" id="CHEBI:83900"/>
    </ligand>
</feature>
<feature type="binding site" evidence="1">
    <location>
        <position position="195"/>
    </location>
    <ligand>
        <name>UDP-N-acetyl-alpha-D-muramoyl-L-alanyl-D-glutamate</name>
        <dbReference type="ChEBI" id="CHEBI:83900"/>
    </ligand>
</feature>
<feature type="modified residue" description="N6-carboxylysine" evidence="1">
    <location>
        <position position="229"/>
    </location>
</feature>
<dbReference type="EC" id="6.3.2.7" evidence="1"/>
<dbReference type="EMBL" id="BA000034">
    <property type="protein sequence ID" value="BAC64670.1"/>
    <property type="molecule type" value="Genomic_DNA"/>
</dbReference>
<dbReference type="RefSeq" id="WP_011054217.1">
    <property type="nucleotide sequence ID" value="NC_004606.1"/>
</dbReference>
<dbReference type="SMR" id="P0DC55"/>
<dbReference type="KEGG" id="sps:SPs1575"/>
<dbReference type="HOGENOM" id="CLU_022291_4_2_9"/>
<dbReference type="UniPathway" id="UPA00219"/>
<dbReference type="GO" id="GO:0005737">
    <property type="term" value="C:cytoplasm"/>
    <property type="evidence" value="ECO:0007669"/>
    <property type="project" value="UniProtKB-SubCell"/>
</dbReference>
<dbReference type="GO" id="GO:0005524">
    <property type="term" value="F:ATP binding"/>
    <property type="evidence" value="ECO:0007669"/>
    <property type="project" value="UniProtKB-UniRule"/>
</dbReference>
<dbReference type="GO" id="GO:0000287">
    <property type="term" value="F:magnesium ion binding"/>
    <property type="evidence" value="ECO:0007669"/>
    <property type="project" value="UniProtKB-UniRule"/>
</dbReference>
<dbReference type="GO" id="GO:0047482">
    <property type="term" value="F:UDP-N-acetylmuramoyl-L-alanyl-D-glutamate-L-lysine ligase activity"/>
    <property type="evidence" value="ECO:0007669"/>
    <property type="project" value="UniProtKB-UniRule"/>
</dbReference>
<dbReference type="GO" id="GO:0051301">
    <property type="term" value="P:cell division"/>
    <property type="evidence" value="ECO:0007669"/>
    <property type="project" value="UniProtKB-KW"/>
</dbReference>
<dbReference type="GO" id="GO:0071555">
    <property type="term" value="P:cell wall organization"/>
    <property type="evidence" value="ECO:0007669"/>
    <property type="project" value="UniProtKB-KW"/>
</dbReference>
<dbReference type="GO" id="GO:0009252">
    <property type="term" value="P:peptidoglycan biosynthetic process"/>
    <property type="evidence" value="ECO:0007669"/>
    <property type="project" value="UniProtKB-UniRule"/>
</dbReference>
<dbReference type="GO" id="GO:0008360">
    <property type="term" value="P:regulation of cell shape"/>
    <property type="evidence" value="ECO:0007669"/>
    <property type="project" value="UniProtKB-KW"/>
</dbReference>
<dbReference type="Gene3D" id="3.90.190.20">
    <property type="entry name" value="Mur ligase, C-terminal domain"/>
    <property type="match status" value="1"/>
</dbReference>
<dbReference type="Gene3D" id="3.40.1190.10">
    <property type="entry name" value="Mur-like, catalytic domain"/>
    <property type="match status" value="1"/>
</dbReference>
<dbReference type="Gene3D" id="3.40.1390.10">
    <property type="entry name" value="MurE/MurF, N-terminal domain"/>
    <property type="match status" value="1"/>
</dbReference>
<dbReference type="HAMAP" id="MF_00208">
    <property type="entry name" value="MurE"/>
    <property type="match status" value="1"/>
</dbReference>
<dbReference type="InterPro" id="IPR036565">
    <property type="entry name" value="Mur-like_cat_sf"/>
</dbReference>
<dbReference type="InterPro" id="IPR004101">
    <property type="entry name" value="Mur_ligase_C"/>
</dbReference>
<dbReference type="InterPro" id="IPR036615">
    <property type="entry name" value="Mur_ligase_C_dom_sf"/>
</dbReference>
<dbReference type="InterPro" id="IPR013221">
    <property type="entry name" value="Mur_ligase_cen"/>
</dbReference>
<dbReference type="InterPro" id="IPR035911">
    <property type="entry name" value="MurE/MurF_N"/>
</dbReference>
<dbReference type="InterPro" id="IPR005761">
    <property type="entry name" value="UDP-N-AcMur-Glu-dNH2Pim_ligase"/>
</dbReference>
<dbReference type="NCBIfam" id="TIGR01085">
    <property type="entry name" value="murE"/>
    <property type="match status" value="1"/>
</dbReference>
<dbReference type="NCBIfam" id="NF010628">
    <property type="entry name" value="PRK14022.1"/>
    <property type="match status" value="1"/>
</dbReference>
<dbReference type="PANTHER" id="PTHR23135">
    <property type="entry name" value="MUR LIGASE FAMILY MEMBER"/>
    <property type="match status" value="1"/>
</dbReference>
<dbReference type="PANTHER" id="PTHR23135:SF4">
    <property type="entry name" value="UDP-N-ACETYLMURAMOYL-L-ALANYL-D-GLUTAMATE--2,6-DIAMINOPIMELATE LIGASE MURE HOMOLOG, CHLOROPLASTIC"/>
    <property type="match status" value="1"/>
</dbReference>
<dbReference type="Pfam" id="PF02875">
    <property type="entry name" value="Mur_ligase_C"/>
    <property type="match status" value="1"/>
</dbReference>
<dbReference type="Pfam" id="PF08245">
    <property type="entry name" value="Mur_ligase_M"/>
    <property type="match status" value="1"/>
</dbReference>
<dbReference type="SUPFAM" id="SSF53623">
    <property type="entry name" value="MurD-like peptide ligases, catalytic domain"/>
    <property type="match status" value="1"/>
</dbReference>
<dbReference type="SUPFAM" id="SSF53244">
    <property type="entry name" value="MurD-like peptide ligases, peptide-binding domain"/>
    <property type="match status" value="1"/>
</dbReference>
<dbReference type="SUPFAM" id="SSF63418">
    <property type="entry name" value="MurE/MurF N-terminal domain"/>
    <property type="match status" value="1"/>
</dbReference>
<proteinExistence type="inferred from homology"/>
<gene>
    <name evidence="1" type="primary">murE</name>
    <name type="ordered locus">SPs1575</name>
</gene>
<reference key="1">
    <citation type="journal article" date="2003" name="Genome Res.">
        <title>Genome sequence of an M3 strain of Streptococcus pyogenes reveals a large-scale genomic rearrangement in invasive strains and new insights into phage evolution.</title>
        <authorList>
            <person name="Nakagawa I."/>
            <person name="Kurokawa K."/>
            <person name="Yamashita A."/>
            <person name="Nakata M."/>
            <person name="Tomiyasu Y."/>
            <person name="Okahashi N."/>
            <person name="Kawabata S."/>
            <person name="Yamazaki K."/>
            <person name="Shiba T."/>
            <person name="Yasunaga T."/>
            <person name="Hayashi H."/>
            <person name="Hattori M."/>
            <person name="Hamada S."/>
        </authorList>
    </citation>
    <scope>NUCLEOTIDE SEQUENCE [LARGE SCALE GENOMIC DNA]</scope>
    <source>
        <strain>SSI-1</strain>
    </source>
</reference>
<organism>
    <name type="scientific">Streptococcus pyogenes serotype M3 (strain SSI-1)</name>
    <dbReference type="NCBI Taxonomy" id="193567"/>
    <lineage>
        <taxon>Bacteria</taxon>
        <taxon>Bacillati</taxon>
        <taxon>Bacillota</taxon>
        <taxon>Bacilli</taxon>
        <taxon>Lactobacillales</taxon>
        <taxon>Streptococcaceae</taxon>
        <taxon>Streptococcus</taxon>
    </lineage>
</organism>
<name>MURE_STRPQ</name>
<protein>
    <recommendedName>
        <fullName evidence="1">UDP-N-acetylmuramoyl-L-alanyl-D-glutamate--L-lysine ligase</fullName>
        <ecNumber evidence="1">6.3.2.7</ecNumber>
    </recommendedName>
    <alternativeName>
        <fullName evidence="1">L-lysine-adding enzyme</fullName>
    </alternativeName>
    <alternativeName>
        <fullName evidence="1">UDP-MurNAc-L-Ala-D-Glu:L-Lys ligase</fullName>
    </alternativeName>
    <alternativeName>
        <fullName evidence="1">UDP-MurNAc-tripeptide synthetase</fullName>
    </alternativeName>
    <alternativeName>
        <fullName evidence="1">UDP-N-acetylmuramyl-tripeptide synthetase</fullName>
    </alternativeName>
</protein>
<comment type="function">
    <text evidence="1">Catalyzes the addition of L-lysine to the nucleotide precursor UDP-N-acetylmuramoyl-L-alanyl-D-glutamate (UMAG) in the biosynthesis of bacterial cell-wall peptidoglycan.</text>
</comment>
<comment type="catalytic activity">
    <reaction evidence="1">
        <text>UDP-N-acetyl-alpha-D-muramoyl-L-alanyl-D-glutamate + L-lysine + ATP = UDP-N-acetyl-alpha-D-muramoyl-L-alanyl-gamma-D-glutamyl-L-lysine + ADP + phosphate + H(+)</text>
        <dbReference type="Rhea" id="RHEA:17969"/>
        <dbReference type="ChEBI" id="CHEBI:15378"/>
        <dbReference type="ChEBI" id="CHEBI:30616"/>
        <dbReference type="ChEBI" id="CHEBI:32551"/>
        <dbReference type="ChEBI" id="CHEBI:43474"/>
        <dbReference type="ChEBI" id="CHEBI:83900"/>
        <dbReference type="ChEBI" id="CHEBI:83903"/>
        <dbReference type="ChEBI" id="CHEBI:456216"/>
        <dbReference type="EC" id="6.3.2.7"/>
    </reaction>
</comment>
<comment type="pathway">
    <text evidence="1">Cell wall biogenesis; peptidoglycan biosynthesis.</text>
</comment>
<comment type="subcellular location">
    <subcellularLocation>
        <location evidence="1">Cytoplasm</location>
    </subcellularLocation>
</comment>
<comment type="PTM">
    <text evidence="1">Carboxylation is probably crucial for Mg(2+) binding and, consequently, for the gamma-phosphate positioning of ATP.</text>
</comment>
<comment type="similarity">
    <text evidence="1">Belongs to the MurCDEF family. MurE subfamily.</text>
</comment>
<sequence>MITIEQLLDILKKDHNFREVLDADEYHYHYQGFSFERLSYDSRQVDGKTLFFAKGATFKADYLKEAITNGLQLYISEVDYELGIPVVLVTDIKKAMSLIAMAFYGNPQEKLKLLAFTGTKGKTTAAYFAYHMLKESYKPAMFSTMNTTLDGKTFFKSQLTTPESLDLFAMMAECVTNGMTHLIMEVSSQAYLVDRVYGLTFDVGVFLNISPDHIGPIEHPTFEDYFYHKRLLMENSRAVVINSVMDHFSFLADQVADQEHVFYGPLSDNQITTSQAFSFEAKGQLAGHYDIQLIGHFNQENAMAAGLACLRLGASLADIQKGIAKTRVPGRMEVLTMTNHAKVFVDYAHNGDSLEKLLSVVEEHQTGKLMLILGAPGNKGESRRADFGRVIHQHPNLTVILTADDPNFEDPEDISKEIASHIARPVEIISDREQAIQKAMSLCQGAKDAVIIAGKGADAYQIVKGQQVAYAGDLAIAKHYL</sequence>
<evidence type="ECO:0000255" key="1">
    <source>
        <dbReference type="HAMAP-Rule" id="MF_00208"/>
    </source>
</evidence>
<accession>P0DC55</accession>
<accession>Q8K8H6</accession>
<keyword id="KW-0067">ATP-binding</keyword>
<keyword id="KW-0131">Cell cycle</keyword>
<keyword id="KW-0132">Cell division</keyword>
<keyword id="KW-0133">Cell shape</keyword>
<keyword id="KW-0961">Cell wall biogenesis/degradation</keyword>
<keyword id="KW-0963">Cytoplasm</keyword>
<keyword id="KW-0436">Ligase</keyword>
<keyword id="KW-0547">Nucleotide-binding</keyword>
<keyword id="KW-0573">Peptidoglycan synthesis</keyword>